<feature type="chain" id="PRO_0000223653" description="Serine/threonine-protein phosphatase 4 regulatory subunit 2">
    <location>
        <begin position="1"/>
        <end position="402"/>
    </location>
</feature>
<feature type="region of interest" description="Disordered" evidence="2">
    <location>
        <begin position="258"/>
        <end position="402"/>
    </location>
</feature>
<feature type="compositionally biased region" description="Polar residues" evidence="2">
    <location>
        <begin position="266"/>
        <end position="277"/>
    </location>
</feature>
<feature type="compositionally biased region" description="Acidic residues" evidence="2">
    <location>
        <begin position="278"/>
        <end position="319"/>
    </location>
</feature>
<feature type="compositionally biased region" description="Basic and acidic residues" evidence="2">
    <location>
        <begin position="320"/>
        <end position="337"/>
    </location>
</feature>
<feature type="compositionally biased region" description="Low complexity" evidence="2">
    <location>
        <begin position="345"/>
        <end position="358"/>
    </location>
</feature>
<keyword id="KW-0539">Nucleus</keyword>
<keyword id="KW-1185">Reference proteome</keyword>
<comment type="function">
    <text evidence="1">Regulatory subunit of the histone H2A phosphatase complex, which dephosphorylates H2AS128ph (gamma-H2A) that has been displaced from sites of DNA lesions in the double-stranded DNA break repair process. Dephosphorylation is necessary for efficient recovery from the DNA damage checkpoint (By similarity).</text>
</comment>
<comment type="subunit">
    <text evidence="1">Regulatory subunit (R2) of the histone H2A phosphatase complex (HTP-C) consisting of PPH3, PSY2 and PSY4.</text>
</comment>
<comment type="subcellular location">
    <subcellularLocation>
        <location evidence="1">Nucleus</location>
    </subcellularLocation>
</comment>
<comment type="similarity">
    <text evidence="3">Belongs to the PPP4R2 family.</text>
</comment>
<protein>
    <recommendedName>
        <fullName>Serine/threonine-protein phosphatase 4 regulatory subunit 2</fullName>
        <shortName>PP4R2</shortName>
    </recommendedName>
</protein>
<sequence length="402" mass="46539">MDSASIDAIHMNGIKSKYLYDILKGIVREKNYDVLETINVSEFLAELLDHMVNTIPNELFQTKVNNGRHTVGRKEDSEENEEAVYGTDIDDANDVHTRQLDDLKRISTHLTTNFKDKSQLPFTIVRICELCFDPFHYFKTYELDKFVNALQKCCLVRGAWRRYELKDVRELSNSQSDKEHIDCDQNDVALSKIPWLDEKMVSELTPFIKEIDTIMSVNLSFEDDEMDDDDDDNLKNQNNDRIITHQDDNIIVEEYYENEDQDDENTGFSNQVINDNNDSQEDDDEDSDYIEEDEGDEDEDDDDDEEEEEEEDGDEDEDEDKHFDIKVEEEAVKEDANTTRNELMNVSNNSDDSSLQNDTGIAISSQNDTRDLSKRRLPLSDENDGNYANPASFSKRNKASES</sequence>
<reference key="1">
    <citation type="journal article" date="2004" name="Nature">
        <title>Genome evolution in yeasts.</title>
        <authorList>
            <person name="Dujon B."/>
            <person name="Sherman D."/>
            <person name="Fischer G."/>
            <person name="Durrens P."/>
            <person name="Casaregola S."/>
            <person name="Lafontaine I."/>
            <person name="de Montigny J."/>
            <person name="Marck C."/>
            <person name="Neuveglise C."/>
            <person name="Talla E."/>
            <person name="Goffard N."/>
            <person name="Frangeul L."/>
            <person name="Aigle M."/>
            <person name="Anthouard V."/>
            <person name="Babour A."/>
            <person name="Barbe V."/>
            <person name="Barnay S."/>
            <person name="Blanchin S."/>
            <person name="Beckerich J.-M."/>
            <person name="Beyne E."/>
            <person name="Bleykasten C."/>
            <person name="Boisrame A."/>
            <person name="Boyer J."/>
            <person name="Cattolico L."/>
            <person name="Confanioleri F."/>
            <person name="de Daruvar A."/>
            <person name="Despons L."/>
            <person name="Fabre E."/>
            <person name="Fairhead C."/>
            <person name="Ferry-Dumazet H."/>
            <person name="Groppi A."/>
            <person name="Hantraye F."/>
            <person name="Hennequin C."/>
            <person name="Jauniaux N."/>
            <person name="Joyet P."/>
            <person name="Kachouri R."/>
            <person name="Kerrest A."/>
            <person name="Koszul R."/>
            <person name="Lemaire M."/>
            <person name="Lesur I."/>
            <person name="Ma L."/>
            <person name="Muller H."/>
            <person name="Nicaud J.-M."/>
            <person name="Nikolski M."/>
            <person name="Oztas S."/>
            <person name="Ozier-Kalogeropoulos O."/>
            <person name="Pellenz S."/>
            <person name="Potier S."/>
            <person name="Richard G.-F."/>
            <person name="Straub M.-L."/>
            <person name="Suleau A."/>
            <person name="Swennen D."/>
            <person name="Tekaia F."/>
            <person name="Wesolowski-Louvel M."/>
            <person name="Westhof E."/>
            <person name="Wirth B."/>
            <person name="Zeniou-Meyer M."/>
            <person name="Zivanovic Y."/>
            <person name="Bolotin-Fukuhara M."/>
            <person name="Thierry A."/>
            <person name="Bouchier C."/>
            <person name="Caudron B."/>
            <person name="Scarpelli C."/>
            <person name="Gaillardin C."/>
            <person name="Weissenbach J."/>
            <person name="Wincker P."/>
            <person name="Souciet J.-L."/>
        </authorList>
    </citation>
    <scope>NUCLEOTIDE SEQUENCE [LARGE SCALE GENOMIC DNA]</scope>
    <source>
        <strain>ATCC 2001 / BCRC 20586 / JCM 3761 / NBRC 0622 / NRRL Y-65 / CBS 138</strain>
    </source>
</reference>
<gene>
    <name type="primary">PSY4</name>
    <name type="ordered locus">CAGL0F04587g</name>
</gene>
<name>PP4R2_CANGA</name>
<proteinExistence type="inferred from homology"/>
<organism>
    <name type="scientific">Candida glabrata (strain ATCC 2001 / BCRC 20586 / JCM 3761 / NBRC 0622 / NRRL Y-65 / CBS 138)</name>
    <name type="common">Yeast</name>
    <name type="synonym">Nakaseomyces glabratus</name>
    <dbReference type="NCBI Taxonomy" id="284593"/>
    <lineage>
        <taxon>Eukaryota</taxon>
        <taxon>Fungi</taxon>
        <taxon>Dikarya</taxon>
        <taxon>Ascomycota</taxon>
        <taxon>Saccharomycotina</taxon>
        <taxon>Saccharomycetes</taxon>
        <taxon>Saccharomycetales</taxon>
        <taxon>Saccharomycetaceae</taxon>
        <taxon>Nakaseomyces</taxon>
    </lineage>
</organism>
<accession>Q6FUC3</accession>
<dbReference type="EMBL" id="CR380952">
    <property type="protein sequence ID" value="CAG59095.1"/>
    <property type="molecule type" value="Genomic_DNA"/>
</dbReference>
<dbReference type="RefSeq" id="XP_446171.1">
    <property type="nucleotide sequence ID" value="XM_446171.1"/>
</dbReference>
<dbReference type="SMR" id="Q6FUC3"/>
<dbReference type="STRING" id="284593.Q6FUC3"/>
<dbReference type="EnsemblFungi" id="CAGL0F04587g-T">
    <property type="protein sequence ID" value="CAGL0F04587g-T-p1"/>
    <property type="gene ID" value="CAGL0F04587g"/>
</dbReference>
<dbReference type="KEGG" id="cgr:2887634"/>
<dbReference type="CGD" id="CAL0129465">
    <property type="gene designation" value="CAGL0F04587g"/>
</dbReference>
<dbReference type="VEuPathDB" id="FungiDB:CAGL0F04587g"/>
<dbReference type="eggNOG" id="ENOG502S2WZ">
    <property type="taxonomic scope" value="Eukaryota"/>
</dbReference>
<dbReference type="HOGENOM" id="CLU_685108_0_0_1"/>
<dbReference type="InParanoid" id="Q6FUC3"/>
<dbReference type="OMA" id="CYDPFKY"/>
<dbReference type="Proteomes" id="UP000002428">
    <property type="component" value="Chromosome F"/>
</dbReference>
<dbReference type="GO" id="GO:0005737">
    <property type="term" value="C:cytoplasm"/>
    <property type="evidence" value="ECO:0007669"/>
    <property type="project" value="EnsemblFungi"/>
</dbReference>
<dbReference type="GO" id="GO:0005634">
    <property type="term" value="C:nucleus"/>
    <property type="evidence" value="ECO:0007669"/>
    <property type="project" value="UniProtKB-SubCell"/>
</dbReference>
<dbReference type="GO" id="GO:0030289">
    <property type="term" value="C:protein phosphatase 4 complex"/>
    <property type="evidence" value="ECO:0007669"/>
    <property type="project" value="EnsemblFungi"/>
</dbReference>
<dbReference type="GO" id="GO:0019888">
    <property type="term" value="F:protein phosphatase regulator activity"/>
    <property type="evidence" value="ECO:0007669"/>
    <property type="project" value="EnsemblFungi"/>
</dbReference>
<dbReference type="GO" id="GO:2000002">
    <property type="term" value="P:negative regulation of DNA damage checkpoint"/>
    <property type="evidence" value="ECO:0007669"/>
    <property type="project" value="EnsemblFungi"/>
</dbReference>
<dbReference type="InterPro" id="IPR015267">
    <property type="entry name" value="PPP4R2"/>
</dbReference>
<dbReference type="PANTHER" id="PTHR16487">
    <property type="entry name" value="PPP4R2-RELATED PROTEIN"/>
    <property type="match status" value="1"/>
</dbReference>
<dbReference type="PANTHER" id="PTHR16487:SF0">
    <property type="entry name" value="PROTEIN PHOSPHATASE 4 REGULATORY SUBUNIT 2-RELATED"/>
    <property type="match status" value="1"/>
</dbReference>
<dbReference type="Pfam" id="PF09184">
    <property type="entry name" value="PPP4R2"/>
    <property type="match status" value="1"/>
</dbReference>
<evidence type="ECO:0000250" key="1"/>
<evidence type="ECO:0000256" key="2">
    <source>
        <dbReference type="SAM" id="MobiDB-lite"/>
    </source>
</evidence>
<evidence type="ECO:0000305" key="3"/>